<organism>
    <name type="scientific">Yersinia pseudotuberculosis serotype IB (strain PB1/+)</name>
    <dbReference type="NCBI Taxonomy" id="502801"/>
    <lineage>
        <taxon>Bacteria</taxon>
        <taxon>Pseudomonadati</taxon>
        <taxon>Pseudomonadota</taxon>
        <taxon>Gammaproteobacteria</taxon>
        <taxon>Enterobacterales</taxon>
        <taxon>Yersiniaceae</taxon>
        <taxon>Yersinia</taxon>
    </lineage>
</organism>
<accession>B2K5K9</accession>
<keyword id="KW-0997">Cell inner membrane</keyword>
<keyword id="KW-1003">Cell membrane</keyword>
<keyword id="KW-0441">Lipid A biosynthesis</keyword>
<keyword id="KW-0444">Lipid biosynthesis</keyword>
<keyword id="KW-0443">Lipid metabolism</keyword>
<keyword id="KW-0448">Lipopolysaccharide biosynthesis</keyword>
<keyword id="KW-0472">Membrane</keyword>
<keyword id="KW-0812">Transmembrane</keyword>
<keyword id="KW-1133">Transmembrane helix</keyword>
<keyword id="KW-0813">Transport</keyword>
<dbReference type="EMBL" id="CP001048">
    <property type="protein sequence ID" value="ACC89360.1"/>
    <property type="molecule type" value="Genomic_DNA"/>
</dbReference>
<dbReference type="RefSeq" id="WP_002211819.1">
    <property type="nucleotide sequence ID" value="NZ_CP009780.1"/>
</dbReference>
<dbReference type="GeneID" id="57976261"/>
<dbReference type="KEGG" id="ypb:YPTS_2399"/>
<dbReference type="PATRIC" id="fig|502801.10.peg.1805"/>
<dbReference type="UniPathway" id="UPA00030"/>
<dbReference type="GO" id="GO:0005886">
    <property type="term" value="C:plasma membrane"/>
    <property type="evidence" value="ECO:0007669"/>
    <property type="project" value="UniProtKB-SubCell"/>
</dbReference>
<dbReference type="GO" id="GO:1901505">
    <property type="term" value="F:carbohydrate derivative transmembrane transporter activity"/>
    <property type="evidence" value="ECO:0007669"/>
    <property type="project" value="InterPro"/>
</dbReference>
<dbReference type="GO" id="GO:0009245">
    <property type="term" value="P:lipid A biosynthetic process"/>
    <property type="evidence" value="ECO:0007669"/>
    <property type="project" value="UniProtKB-UniRule"/>
</dbReference>
<dbReference type="GO" id="GO:0009103">
    <property type="term" value="P:lipopolysaccharide biosynthetic process"/>
    <property type="evidence" value="ECO:0007669"/>
    <property type="project" value="UniProtKB-UniRule"/>
</dbReference>
<dbReference type="Gene3D" id="1.10.3730.20">
    <property type="match status" value="1"/>
</dbReference>
<dbReference type="HAMAP" id="MF_00538">
    <property type="entry name" value="Flippase_ArnF"/>
    <property type="match status" value="1"/>
</dbReference>
<dbReference type="InterPro" id="IPR022832">
    <property type="entry name" value="Flippase_ArnF"/>
</dbReference>
<dbReference type="InterPro" id="IPR000390">
    <property type="entry name" value="Small_drug/metabolite_transptr"/>
</dbReference>
<dbReference type="NCBIfam" id="NF002816">
    <property type="entry name" value="PRK02971.1-2"/>
    <property type="match status" value="1"/>
</dbReference>
<dbReference type="PANTHER" id="PTHR30561:SF9">
    <property type="entry name" value="4-AMINO-4-DEOXY-L-ARABINOSE-PHOSPHOUNDECAPRENOL FLIPPASE SUBUNIT ARNF-RELATED"/>
    <property type="match status" value="1"/>
</dbReference>
<dbReference type="PANTHER" id="PTHR30561">
    <property type="entry name" value="SMR FAMILY PROTON-DEPENDENT DRUG EFFLUX TRANSPORTER SUGE"/>
    <property type="match status" value="1"/>
</dbReference>
<dbReference type="SUPFAM" id="SSF103481">
    <property type="entry name" value="Multidrug resistance efflux transporter EmrE"/>
    <property type="match status" value="1"/>
</dbReference>
<comment type="function">
    <text evidence="1">Translocates 4-amino-4-deoxy-L-arabinose-phosphoundecaprenol (alpha-L-Ara4N-phosphoundecaprenol) from the cytoplasmic to the periplasmic side of the inner membrane.</text>
</comment>
<comment type="pathway">
    <text evidence="1">Bacterial outer membrane biogenesis; lipopolysaccharide biosynthesis.</text>
</comment>
<comment type="subunit">
    <text evidence="1">Heterodimer of ArnE and ArnF.</text>
</comment>
<comment type="subcellular location">
    <subcellularLocation>
        <location evidence="1">Cell inner membrane</location>
        <topology evidence="1">Multi-pass membrane protein</topology>
    </subcellularLocation>
</comment>
<comment type="similarity">
    <text evidence="1">Belongs to the ArnF family.</text>
</comment>
<reference key="1">
    <citation type="submission" date="2008-04" db="EMBL/GenBank/DDBJ databases">
        <title>Complete sequence of Yersinia pseudotuberculosis PB1/+.</title>
        <authorList>
            <person name="Copeland A."/>
            <person name="Lucas S."/>
            <person name="Lapidus A."/>
            <person name="Glavina del Rio T."/>
            <person name="Dalin E."/>
            <person name="Tice H."/>
            <person name="Bruce D."/>
            <person name="Goodwin L."/>
            <person name="Pitluck S."/>
            <person name="Munk A.C."/>
            <person name="Brettin T."/>
            <person name="Detter J.C."/>
            <person name="Han C."/>
            <person name="Tapia R."/>
            <person name="Schmutz J."/>
            <person name="Larimer F."/>
            <person name="Land M."/>
            <person name="Hauser L."/>
            <person name="Challacombe J.F."/>
            <person name="Green L."/>
            <person name="Lindler L.E."/>
            <person name="Nikolich M.P."/>
            <person name="Richardson P."/>
        </authorList>
    </citation>
    <scope>NUCLEOTIDE SEQUENCE [LARGE SCALE GENOMIC DNA]</scope>
    <source>
        <strain>PB1/+</strain>
    </source>
</reference>
<sequence length="128" mass="14223">MKGYLWGGASVVLVTVAQLVLKWGMMNIPLLSLADINVQFLTMYFVQLASVMCGLMGYALSMLCWFFALRYLPLNRAYPLLSLSYALVYLGAVLLPWFNEPATLLKTLGAGFILLGIWLINIKPIKAS</sequence>
<feature type="chain" id="PRO_1000128672" description="Probable 4-amino-4-deoxy-L-arabinose-phosphoundecaprenol flippase subunit ArnF">
    <location>
        <begin position="1"/>
        <end position="128"/>
    </location>
</feature>
<feature type="topological domain" description="Cytoplasmic" evidence="1">
    <location>
        <begin position="1"/>
        <end position="10"/>
    </location>
</feature>
<feature type="transmembrane region" description="Helical" evidence="1">
    <location>
        <begin position="11"/>
        <end position="31"/>
    </location>
</feature>
<feature type="topological domain" description="Periplasmic" evidence="1">
    <location>
        <begin position="32"/>
        <end position="47"/>
    </location>
</feature>
<feature type="transmembrane region" description="Helical" evidence="1">
    <location>
        <begin position="48"/>
        <end position="68"/>
    </location>
</feature>
<feature type="topological domain" description="Cytoplasmic" evidence="1">
    <location>
        <begin position="69"/>
        <end position="77"/>
    </location>
</feature>
<feature type="transmembrane region" description="Helical" evidence="1">
    <location>
        <begin position="78"/>
        <end position="98"/>
    </location>
</feature>
<feature type="topological domain" description="Periplasmic" evidence="1">
    <location>
        <begin position="99"/>
        <end position="101"/>
    </location>
</feature>
<feature type="transmembrane region" description="Helical" evidence="1">
    <location>
        <begin position="102"/>
        <end position="122"/>
    </location>
</feature>
<feature type="topological domain" description="Cytoplasmic" evidence="1">
    <location>
        <begin position="123"/>
        <end position="128"/>
    </location>
</feature>
<name>ARNF_YERPB</name>
<protein>
    <recommendedName>
        <fullName evidence="1">Probable 4-amino-4-deoxy-L-arabinose-phosphoundecaprenol flippase subunit ArnF</fullName>
        <shortName evidence="1">L-Ara4N-phosphoundecaprenol flippase subunit ArnF</shortName>
    </recommendedName>
    <alternativeName>
        <fullName evidence="1">Undecaprenyl phosphate-aminoarabinose flippase subunit ArnF</fullName>
    </alternativeName>
</protein>
<proteinExistence type="inferred from homology"/>
<gene>
    <name evidence="1" type="primary">arnF</name>
    <name type="ordered locus">YPTS_2399</name>
</gene>
<evidence type="ECO:0000255" key="1">
    <source>
        <dbReference type="HAMAP-Rule" id="MF_00538"/>
    </source>
</evidence>